<sequence length="402" mass="44577">QKPGETKEVHPQLTTFRCTKRGGCKPATNFIVLDSLSHPIHRAEGLGPGGCGDWGNPPPKDVCPDVESCAKNCIMEGIPDYSQYGVTTNGTSLRLQHILPDGRVPSPRVYLLDKTKRRYEMLHLTGFEFTFDVDATKLPCGMNSALYLSEMHPTGAKSKYNPGGAYYGTGYCDAQCFVTPFINGLGNIEGKGSCCNEMDIWEANSRASHVAPHTCNKKGLYLCEGEECAFEGVCDKNGCGWNNYRVNVTDYYGRGEEFKVNTLKPFTVVTQFLANRRGKLEKIHRFYVQDGKVIESFYTNKEGVPYTNMIDDEFCEATGSRKYMELGATQGMGEALTRGMVLAMSIWWDQGGNMEWLDHGEAGPCAKGEGAPSNIVQVEPFPEVTYTNLRWGEIGSTYQELQ</sequence>
<dbReference type="EC" id="3.2.1.4"/>
<dbReference type="PDB" id="1A39">
    <property type="method" value="X-ray"/>
    <property type="resolution" value="2.20 A"/>
    <property type="chains" value="A=2-402"/>
</dbReference>
<dbReference type="PDB" id="1DYM">
    <property type="method" value="X-ray"/>
    <property type="resolution" value="1.75 A"/>
    <property type="chains" value="A=2-402"/>
</dbReference>
<dbReference type="PDB" id="1OJI">
    <property type="method" value="X-ray"/>
    <property type="resolution" value="2.15 A"/>
    <property type="chains" value="A=2-402"/>
</dbReference>
<dbReference type="PDB" id="1OJJ">
    <property type="method" value="X-ray"/>
    <property type="resolution" value="1.40 A"/>
    <property type="chains" value="A/B=2-402"/>
</dbReference>
<dbReference type="PDB" id="1OJK">
    <property type="method" value="X-ray"/>
    <property type="resolution" value="1.50 A"/>
    <property type="chains" value="A/B=2-402"/>
</dbReference>
<dbReference type="PDB" id="2A39">
    <property type="method" value="X-ray"/>
    <property type="resolution" value="2.20 A"/>
    <property type="chains" value="A/B=2-398"/>
</dbReference>
<dbReference type="PDB" id="6YOZ">
    <property type="method" value="X-ray"/>
    <property type="resolution" value="1.88 A"/>
    <property type="chains" value="AAA/BBB=2-400"/>
</dbReference>
<dbReference type="PDB" id="6YP1">
    <property type="method" value="X-ray"/>
    <property type="resolution" value="1.20 A"/>
    <property type="chains" value="AAA=1-402"/>
</dbReference>
<dbReference type="PDBsum" id="1A39"/>
<dbReference type="PDBsum" id="1DYM"/>
<dbReference type="PDBsum" id="1OJI"/>
<dbReference type="PDBsum" id="1OJJ"/>
<dbReference type="PDBsum" id="1OJK"/>
<dbReference type="PDBsum" id="2A39"/>
<dbReference type="PDBsum" id="6YOZ"/>
<dbReference type="PDBsum" id="6YP1"/>
<dbReference type="SMR" id="P56680"/>
<dbReference type="Allergome" id="8280">
    <property type="allergen name" value="Hum in Cellulase"/>
</dbReference>
<dbReference type="CAZy" id="GH7">
    <property type="family name" value="Glycoside Hydrolase Family 7"/>
</dbReference>
<dbReference type="GlyCosmos" id="P56680">
    <property type="glycosylation" value="2 sites, No reported glycans"/>
</dbReference>
<dbReference type="BioCyc" id="MetaCyc:MONOMER-17623"/>
<dbReference type="EvolutionaryTrace" id="P56680"/>
<dbReference type="GO" id="GO:0005576">
    <property type="term" value="C:extracellular region"/>
    <property type="evidence" value="ECO:0007669"/>
    <property type="project" value="UniProtKB-SubCell"/>
</dbReference>
<dbReference type="GO" id="GO:0008810">
    <property type="term" value="F:cellulase activity"/>
    <property type="evidence" value="ECO:0007669"/>
    <property type="project" value="UniProtKB-EC"/>
</dbReference>
<dbReference type="GO" id="GO:0030245">
    <property type="term" value="P:cellulose catabolic process"/>
    <property type="evidence" value="ECO:0007669"/>
    <property type="project" value="UniProtKB-KW"/>
</dbReference>
<dbReference type="CDD" id="cd07999">
    <property type="entry name" value="GH7_CBH_EG"/>
    <property type="match status" value="1"/>
</dbReference>
<dbReference type="Gene3D" id="2.70.100.10">
    <property type="entry name" value="Glycoside hydrolase, family 7, domain"/>
    <property type="match status" value="1"/>
</dbReference>
<dbReference type="InterPro" id="IPR013320">
    <property type="entry name" value="ConA-like_dom_sf"/>
</dbReference>
<dbReference type="InterPro" id="IPR001722">
    <property type="entry name" value="Glyco_hydro_7"/>
</dbReference>
<dbReference type="InterPro" id="IPR037019">
    <property type="entry name" value="Glyco_hydro_7_sf"/>
</dbReference>
<dbReference type="PANTHER" id="PTHR33753">
    <property type="entry name" value="1,4-BETA-D-GLUCAN CELLOBIOHYDROLASE B"/>
    <property type="match status" value="1"/>
</dbReference>
<dbReference type="PANTHER" id="PTHR33753:SF1">
    <property type="entry name" value="ENDO-BETA-1,4-GLUCANASE CELB"/>
    <property type="match status" value="1"/>
</dbReference>
<dbReference type="Pfam" id="PF00840">
    <property type="entry name" value="Glyco_hydro_7"/>
    <property type="match status" value="1"/>
</dbReference>
<dbReference type="PRINTS" id="PR00734">
    <property type="entry name" value="GLHYDRLASE7"/>
</dbReference>
<dbReference type="SUPFAM" id="SSF49899">
    <property type="entry name" value="Concanavalin A-like lectins/glucanases"/>
    <property type="match status" value="1"/>
</dbReference>
<comment type="function">
    <text>The biological conversion of cellulose to glucose generally requires three types of hydrolytic enzymes: (1) Endoglucanases which cut internal beta-1,4-glucosidic bonds; (2) Exocellobiohydrolases that cut the disaccharide cellobiose from the non-reducing end of the cellulose polymer chain; (3) Beta-1,4-glucosidases which hydrolyze the cellobiose and other short cello-oligosaccharides to glucose.</text>
</comment>
<comment type="catalytic activity">
    <reaction>
        <text>Endohydrolysis of (1-&gt;4)-beta-D-glucosidic linkages in cellulose, lichenin and cereal beta-D-glucans.</text>
        <dbReference type="EC" id="3.2.1.4"/>
    </reaction>
</comment>
<comment type="subunit">
    <text>Monomer.</text>
</comment>
<comment type="subcellular location">
    <subcellularLocation>
        <location>Secreted</location>
    </subcellularLocation>
</comment>
<comment type="similarity">
    <text evidence="2">Belongs to the glycosyl hydrolase 7 (cellulase C) family.</text>
</comment>
<reference key="1">
    <citation type="journal article" date="1997" name="J. Biotechnol.">
        <title>Oligosaccharide specificity of a family 7 endoglucanase: insertion of potential sugar-binding subsites.</title>
        <authorList>
            <person name="Davies G.J."/>
            <person name="Ducros V."/>
            <person name="Lewis R.J."/>
            <person name="Borchert T.V."/>
            <person name="Schuelein M."/>
        </authorList>
    </citation>
    <scope>X-RAY CRYSTALLOGRAPHY (2.2 ANGSTROMS) OF MUTANT TRP-37/TRP-39</scope>
    <scope>PYROGLUTAMATE FORMATION AT GLN-1</scope>
</reference>
<reference key="2">
    <citation type="journal article" date="1998" name="Biochem. J.">
        <title>Crystal structure of the family 7 endoglucanase I (Cel7B) from Humicola insolens at 2.2 A resolution and identification of the catalytic nucleophile by trapping of the covalent glycosyl-enzyme intermediate.</title>
        <authorList>
            <person name="MacKenzie L.F."/>
            <person name="Sulzenbacher G."/>
            <person name="Divne C."/>
            <person name="Jones T.A."/>
            <person name="Woeldike H.F."/>
            <person name="Schuelein M."/>
            <person name="Withers S.G."/>
            <person name="Davies G.J."/>
        </authorList>
    </citation>
    <scope>X-RAY CRYSTALLOGRAPHY (2.2 ANGSTROMS)</scope>
    <scope>MUTAGENESIS</scope>
</reference>
<feature type="chain" id="PRO_0000184057" description="Endoglucanase 1">
    <location>
        <begin position="1"/>
        <end position="402"/>
    </location>
</feature>
<feature type="active site" description="Nucleophile">
    <location>
        <position position="197"/>
    </location>
</feature>
<feature type="active site" description="Proton donor">
    <location>
        <position position="202"/>
    </location>
</feature>
<feature type="modified residue" description="Pyrrolidone carboxylic acid" evidence="1">
    <location>
        <position position="1"/>
    </location>
</feature>
<feature type="glycosylation site" description="N-linked (GlcNAc...) asparagine">
    <location>
        <position position="89"/>
    </location>
</feature>
<feature type="glycosylation site" description="N-linked (GlcNAc...) asparagine">
    <location>
        <position position="247"/>
    </location>
</feature>
<feature type="disulfide bond">
    <location>
        <begin position="18"/>
        <end position="24"/>
    </location>
</feature>
<feature type="disulfide bond">
    <location>
        <begin position="51"/>
        <end position="73"/>
    </location>
</feature>
<feature type="disulfide bond">
    <location>
        <begin position="63"/>
        <end position="69"/>
    </location>
</feature>
<feature type="disulfide bond">
    <location>
        <begin position="140"/>
        <end position="365"/>
    </location>
</feature>
<feature type="disulfide bond">
    <location>
        <begin position="172"/>
        <end position="195"/>
    </location>
</feature>
<feature type="disulfide bond">
    <location>
        <begin position="176"/>
        <end position="194"/>
    </location>
</feature>
<feature type="disulfide bond">
    <location>
        <begin position="215"/>
        <end position="234"/>
    </location>
</feature>
<feature type="disulfide bond">
    <location>
        <begin position="223"/>
        <end position="228"/>
    </location>
</feature>
<feature type="disulfide bond">
    <location>
        <begin position="239"/>
        <end position="315"/>
    </location>
</feature>
<feature type="strand" evidence="4">
    <location>
        <begin position="12"/>
        <end position="19"/>
    </location>
</feature>
<feature type="turn" evidence="4">
    <location>
        <begin position="20"/>
        <end position="22"/>
    </location>
</feature>
<feature type="strand" evidence="4">
    <location>
        <begin position="23"/>
        <end position="33"/>
    </location>
</feature>
<feature type="helix" evidence="4">
    <location>
        <begin position="35"/>
        <end position="37"/>
    </location>
</feature>
<feature type="strand" evidence="4">
    <location>
        <begin position="40"/>
        <end position="42"/>
    </location>
</feature>
<feature type="turn" evidence="4">
    <location>
        <begin position="60"/>
        <end position="62"/>
    </location>
</feature>
<feature type="helix" evidence="4">
    <location>
        <begin position="66"/>
        <end position="72"/>
    </location>
</feature>
<feature type="strand" evidence="4">
    <location>
        <begin position="73"/>
        <end position="75"/>
    </location>
</feature>
<feature type="helix" evidence="4">
    <location>
        <begin position="81"/>
        <end position="84"/>
    </location>
</feature>
<feature type="strand" evidence="4">
    <location>
        <begin position="86"/>
        <end position="89"/>
    </location>
</feature>
<feature type="strand" evidence="4">
    <location>
        <begin position="92"/>
        <end position="98"/>
    </location>
</feature>
<feature type="strand" evidence="4">
    <location>
        <begin position="108"/>
        <end position="112"/>
    </location>
</feature>
<feature type="strand" evidence="4">
    <location>
        <begin position="116"/>
        <end position="119"/>
    </location>
</feature>
<feature type="strand" evidence="4">
    <location>
        <begin position="127"/>
        <end position="134"/>
    </location>
</feature>
<feature type="strand" evidence="4">
    <location>
        <begin position="143"/>
        <end position="149"/>
    </location>
</feature>
<feature type="turn" evidence="3">
    <location>
        <begin position="153"/>
        <end position="156"/>
    </location>
</feature>
<feature type="helix" evidence="4">
    <location>
        <begin position="164"/>
        <end position="167"/>
    </location>
</feature>
<feature type="strand" evidence="4">
    <location>
        <begin position="180"/>
        <end position="182"/>
    </location>
</feature>
<feature type="strand" evidence="4">
    <location>
        <begin position="192"/>
        <end position="194"/>
    </location>
</feature>
<feature type="strand" evidence="4">
    <location>
        <begin position="197"/>
        <end position="203"/>
    </location>
</feature>
<feature type="strand" evidence="4">
    <location>
        <begin position="208"/>
        <end position="213"/>
    </location>
</feature>
<feature type="strand" evidence="4">
    <location>
        <begin position="215"/>
        <end position="219"/>
    </location>
</feature>
<feature type="strand" evidence="4">
    <location>
        <begin position="221"/>
        <end position="223"/>
    </location>
</feature>
<feature type="helix" evidence="4">
    <location>
        <begin position="225"/>
        <end position="228"/>
    </location>
</feature>
<feature type="strand" evidence="4">
    <location>
        <begin position="232"/>
        <end position="234"/>
    </location>
</feature>
<feature type="helix" evidence="4">
    <location>
        <begin position="243"/>
        <end position="246"/>
    </location>
</feature>
<feature type="strand" evidence="4">
    <location>
        <begin position="250"/>
        <end position="255"/>
    </location>
</feature>
<feature type="strand" evidence="4">
    <location>
        <begin position="258"/>
        <end position="261"/>
    </location>
</feature>
<feature type="strand" evidence="4">
    <location>
        <begin position="266"/>
        <end position="274"/>
    </location>
</feature>
<feature type="strand" evidence="4">
    <location>
        <begin position="280"/>
        <end position="289"/>
    </location>
</feature>
<feature type="strand" evidence="4">
    <location>
        <begin position="292"/>
        <end position="294"/>
    </location>
</feature>
<feature type="strand" evidence="4">
    <location>
        <begin position="308"/>
        <end position="310"/>
    </location>
</feature>
<feature type="helix" evidence="4">
    <location>
        <begin position="312"/>
        <end position="317"/>
    </location>
</feature>
<feature type="helix" evidence="4">
    <location>
        <begin position="321"/>
        <end position="325"/>
    </location>
</feature>
<feature type="helix" evidence="4">
    <location>
        <begin position="328"/>
        <end position="338"/>
    </location>
</feature>
<feature type="strand" evidence="4">
    <location>
        <begin position="340"/>
        <end position="347"/>
    </location>
</feature>
<feature type="turn" evidence="4">
    <location>
        <begin position="350"/>
        <end position="354"/>
    </location>
</feature>
<feature type="helix" evidence="4">
    <location>
        <begin position="355"/>
        <end position="358"/>
    </location>
</feature>
<feature type="helix" evidence="4">
    <location>
        <begin position="360"/>
        <end position="362"/>
    </location>
</feature>
<feature type="turn" evidence="4">
    <location>
        <begin position="367"/>
        <end position="370"/>
    </location>
</feature>
<feature type="helix" evidence="4">
    <location>
        <begin position="372"/>
        <end position="378"/>
    </location>
</feature>
<feature type="strand" evidence="4">
    <location>
        <begin position="383"/>
        <end position="393"/>
    </location>
</feature>
<accession>P56680</accession>
<organism>
    <name type="scientific">Humicola insolens</name>
    <name type="common">Soft-rot fungus</name>
    <dbReference type="NCBI Taxonomy" id="85995"/>
    <lineage>
        <taxon>Eukaryota</taxon>
        <taxon>Fungi</taxon>
        <taxon>Dikarya</taxon>
        <taxon>Ascomycota</taxon>
        <taxon>Pezizomycotina</taxon>
        <taxon>Sordariomycetes</taxon>
        <taxon>Sordariomycetidae</taxon>
        <taxon>Sordariales</taxon>
        <taxon>Chaetomiaceae</taxon>
        <taxon>Mycothermus</taxon>
    </lineage>
</organism>
<proteinExistence type="evidence at protein level"/>
<evidence type="ECO:0000269" key="1">
    <source>
    </source>
</evidence>
<evidence type="ECO:0000305" key="2"/>
<evidence type="ECO:0007829" key="3">
    <source>
        <dbReference type="PDB" id="1OJI"/>
    </source>
</evidence>
<evidence type="ECO:0007829" key="4">
    <source>
        <dbReference type="PDB" id="1OJJ"/>
    </source>
</evidence>
<protein>
    <recommendedName>
        <fullName>Endoglucanase 1</fullName>
        <ecNumber>3.2.1.4</ecNumber>
    </recommendedName>
    <alternativeName>
        <fullName>Cellulase 1</fullName>
    </alternativeName>
    <alternativeName>
        <fullName>Endo-1,4-beta-glucanase 1</fullName>
    </alternativeName>
    <alternativeName>
        <fullName>Endoglucanase I</fullName>
    </alternativeName>
</protein>
<gene>
    <name type="primary">CEL7B</name>
</gene>
<name>GUN1A_HUMIN</name>
<keyword id="KW-0002">3D-structure</keyword>
<keyword id="KW-0119">Carbohydrate metabolism</keyword>
<keyword id="KW-0136">Cellulose degradation</keyword>
<keyword id="KW-1015">Disulfide bond</keyword>
<keyword id="KW-0325">Glycoprotein</keyword>
<keyword id="KW-0326">Glycosidase</keyword>
<keyword id="KW-0378">Hydrolase</keyword>
<keyword id="KW-0624">Polysaccharide degradation</keyword>
<keyword id="KW-0873">Pyrrolidone carboxylic acid</keyword>
<keyword id="KW-0964">Secreted</keyword>